<feature type="chain" id="PRO_0000075470" description="Putative transposase for insertion sequence IS1162">
    <location>
        <begin position="1"/>
        <end position="558"/>
    </location>
</feature>
<feature type="domain" description="HTH IS408-type" evidence="2">
    <location>
        <begin position="11"/>
        <end position="93"/>
    </location>
</feature>
<feature type="domain" description="Integrase catalytic" evidence="1">
    <location>
        <begin position="139"/>
        <end position="336"/>
    </location>
</feature>
<feature type="DNA-binding region" description="H-T-H motif" evidence="2">
    <location>
        <begin position="23"/>
        <end position="44"/>
    </location>
</feature>
<feature type="region of interest" description="Disordered" evidence="3">
    <location>
        <begin position="486"/>
        <end position="558"/>
    </location>
</feature>
<dbReference type="EMBL" id="X79443">
    <property type="protein sequence ID" value="CAA55959.1"/>
    <property type="molecule type" value="Genomic_DNA"/>
</dbReference>
<dbReference type="SMR" id="Q51761"/>
<dbReference type="GO" id="GO:0003677">
    <property type="term" value="F:DNA binding"/>
    <property type="evidence" value="ECO:0007669"/>
    <property type="project" value="UniProtKB-KW"/>
</dbReference>
<dbReference type="GO" id="GO:0015074">
    <property type="term" value="P:DNA integration"/>
    <property type="evidence" value="ECO:0007669"/>
    <property type="project" value="InterPro"/>
</dbReference>
<dbReference type="GO" id="GO:0006310">
    <property type="term" value="P:DNA recombination"/>
    <property type="evidence" value="ECO:0007669"/>
    <property type="project" value="UniProtKB-KW"/>
</dbReference>
<dbReference type="GO" id="GO:0032196">
    <property type="term" value="P:transposition"/>
    <property type="evidence" value="ECO:0007669"/>
    <property type="project" value="UniProtKB-KW"/>
</dbReference>
<dbReference type="Gene3D" id="3.30.420.10">
    <property type="entry name" value="Ribonuclease H-like superfamily/Ribonuclease H"/>
    <property type="match status" value="1"/>
</dbReference>
<dbReference type="InterPro" id="IPR017895">
    <property type="entry name" value="HTH_IS408/IS1162_type"/>
</dbReference>
<dbReference type="InterPro" id="IPR001584">
    <property type="entry name" value="Integrase_cat-core"/>
</dbReference>
<dbReference type="InterPro" id="IPR054353">
    <property type="entry name" value="IstA-like_C"/>
</dbReference>
<dbReference type="InterPro" id="IPR012337">
    <property type="entry name" value="RNaseH-like_sf"/>
</dbReference>
<dbReference type="InterPro" id="IPR036397">
    <property type="entry name" value="RNaseH_sf"/>
</dbReference>
<dbReference type="NCBIfam" id="NF033546">
    <property type="entry name" value="transpos_IS21"/>
    <property type="match status" value="1"/>
</dbReference>
<dbReference type="PANTHER" id="PTHR35004">
    <property type="entry name" value="TRANSPOSASE RV3428C-RELATED"/>
    <property type="match status" value="1"/>
</dbReference>
<dbReference type="PANTHER" id="PTHR35004:SF8">
    <property type="entry name" value="TRANSPOSASE RV3428C-RELATED"/>
    <property type="match status" value="1"/>
</dbReference>
<dbReference type="Pfam" id="PF22483">
    <property type="entry name" value="Mu-transpos_C_2"/>
    <property type="match status" value="1"/>
</dbReference>
<dbReference type="SUPFAM" id="SSF53098">
    <property type="entry name" value="Ribonuclease H-like"/>
    <property type="match status" value="1"/>
</dbReference>
<dbReference type="PROSITE" id="PS50532">
    <property type="entry name" value="HTH_IS408"/>
    <property type="match status" value="1"/>
</dbReference>
<dbReference type="PROSITE" id="PS50994">
    <property type="entry name" value="INTEGRASE"/>
    <property type="match status" value="1"/>
</dbReference>
<name>TRA2_PSEFL</name>
<accession>Q51761</accession>
<proteinExistence type="inferred from homology"/>
<sequence>MAAQRVAMRNIKECLRLKFEGGLSHEKIARALQLSKGVVSKYVTAAAETGMEWPALAVLDEVALAAALLPTARVRQTRGERVLPDLITIHRELRRKGVTLQLLWEEYVAAHPEQPTYRYTQFVEHYRRYASTLKRSMRQQHRAGEKLFIDYAGPTLPVIDPATGEISRAHIFVAALGASNYTYACATPGETQVDWLTALGQAFSYFGGVSEMVVPDNPRALIAHPDRYEPGLNRAALECARHYDTVMLPARPRKPQDKAKAEVAVQVVERWIMRVRHQQFFSLHALNQAIAKLLEDLNQRPFKKLDGCRREWFERLDQPVLRPLPQHPYEVVTFKRCKVNIDYHIEVNGGFYSVPSALARQSVDVRLSAHTVEVLHGNRRVASHLRLQRRGAYSTQSEHMPASHKAHREWTPQRLLDWGERIGPQTRQIVEHQLTHKPHPEMGYRACLGLLSLARQYGNARLEAAASRAVQLRALNGRTVRNLLKQGLDQQPLPKPATPAAQPSSHENVRGADYYTQEELFDDDPTHPEPIAPTAAGRHGPSTGRTMDAAGQPQPELR</sequence>
<organism>
    <name type="scientific">Pseudomonas fluorescens</name>
    <dbReference type="NCBI Taxonomy" id="294"/>
    <lineage>
        <taxon>Bacteria</taxon>
        <taxon>Pseudomonadati</taxon>
        <taxon>Pseudomonadota</taxon>
        <taxon>Gammaproteobacteria</taxon>
        <taxon>Pseudomonadales</taxon>
        <taxon>Pseudomonadaceae</taxon>
        <taxon>Pseudomonas</taxon>
    </lineage>
</organism>
<protein>
    <recommendedName>
        <fullName>Putative transposase for insertion sequence IS1162</fullName>
    </recommendedName>
</protein>
<keyword id="KW-0233">DNA recombination</keyword>
<keyword id="KW-0238">DNA-binding</keyword>
<keyword id="KW-0814">Transposable element</keyword>
<keyword id="KW-0815">Transposition</keyword>
<reference key="1">
    <citation type="journal article" date="1995" name="Gene">
        <title>Characterization and sequence of a novel insertion sequence, IS1162, from Pseudomonas fluorescens.</title>
        <authorList>
            <person name="Solinas F."/>
            <person name="Marconi A.M."/>
            <person name="Ruzzi M."/>
            <person name="Zennaro E."/>
        </authorList>
    </citation>
    <scope>NUCLEOTIDE SEQUENCE [GENOMIC DNA]</scope>
    <source>
        <strain>ST</strain>
    </source>
</reference>
<comment type="function">
    <text evidence="4">Required for the transposition of the insertion element.</text>
</comment>
<comment type="similarity">
    <text evidence="4">Belongs to the transposase IS21/IS408/IS1162 family.</text>
</comment>
<evidence type="ECO:0000255" key="1">
    <source>
        <dbReference type="PROSITE-ProRule" id="PRU00457"/>
    </source>
</evidence>
<evidence type="ECO:0000255" key="2">
    <source>
        <dbReference type="PROSITE-ProRule" id="PRU00616"/>
    </source>
</evidence>
<evidence type="ECO:0000256" key="3">
    <source>
        <dbReference type="SAM" id="MobiDB-lite"/>
    </source>
</evidence>
<evidence type="ECO:0000305" key="4"/>